<sequence length="141" mass="14952">MAKKITGFIKLQIPAGGANPAPPVGPALGQKGVNIMEFCKQFNAKTQSEAGMIIPVVITVYSDKSFTFVTKTPPAAVLLLKEAKLQKGSGEPNRNKVGTVTMDQVRKIAELKRPDLNSIDLEGATQMVIGTARSMGIVVEG</sequence>
<protein>
    <recommendedName>
        <fullName evidence="1">Large ribosomal subunit protein uL11</fullName>
    </recommendedName>
    <alternativeName>
        <fullName evidence="2">50S ribosomal protein L11</fullName>
    </alternativeName>
</protein>
<evidence type="ECO:0000255" key="1">
    <source>
        <dbReference type="HAMAP-Rule" id="MF_00736"/>
    </source>
</evidence>
<evidence type="ECO:0000305" key="2"/>
<keyword id="KW-0488">Methylation</keyword>
<keyword id="KW-1185">Reference proteome</keyword>
<keyword id="KW-0687">Ribonucleoprotein</keyword>
<keyword id="KW-0689">Ribosomal protein</keyword>
<keyword id="KW-0694">RNA-binding</keyword>
<keyword id="KW-0699">rRNA-binding</keyword>
<dbReference type="EMBL" id="AE006470">
    <property type="protein sequence ID" value="AAM71399.1"/>
    <property type="molecule type" value="Genomic_DNA"/>
</dbReference>
<dbReference type="RefSeq" id="NP_661057.1">
    <property type="nucleotide sequence ID" value="NC_002932.3"/>
</dbReference>
<dbReference type="RefSeq" id="WP_010931845.1">
    <property type="nucleotide sequence ID" value="NC_002932.3"/>
</dbReference>
<dbReference type="SMR" id="Q8KG19"/>
<dbReference type="STRING" id="194439.CT0151"/>
<dbReference type="EnsemblBacteria" id="AAM71399">
    <property type="protein sequence ID" value="AAM71399"/>
    <property type="gene ID" value="CT0151"/>
</dbReference>
<dbReference type="KEGG" id="cte:CT0151"/>
<dbReference type="PATRIC" id="fig|194439.7.peg.148"/>
<dbReference type="eggNOG" id="COG0080">
    <property type="taxonomic scope" value="Bacteria"/>
</dbReference>
<dbReference type="HOGENOM" id="CLU_074237_2_1_10"/>
<dbReference type="OrthoDB" id="9802408at2"/>
<dbReference type="Proteomes" id="UP000001007">
    <property type="component" value="Chromosome"/>
</dbReference>
<dbReference type="GO" id="GO:0022625">
    <property type="term" value="C:cytosolic large ribosomal subunit"/>
    <property type="evidence" value="ECO:0007669"/>
    <property type="project" value="TreeGrafter"/>
</dbReference>
<dbReference type="GO" id="GO:0070180">
    <property type="term" value="F:large ribosomal subunit rRNA binding"/>
    <property type="evidence" value="ECO:0007669"/>
    <property type="project" value="UniProtKB-UniRule"/>
</dbReference>
<dbReference type="GO" id="GO:0003735">
    <property type="term" value="F:structural constituent of ribosome"/>
    <property type="evidence" value="ECO:0007669"/>
    <property type="project" value="InterPro"/>
</dbReference>
<dbReference type="GO" id="GO:0006412">
    <property type="term" value="P:translation"/>
    <property type="evidence" value="ECO:0007669"/>
    <property type="project" value="UniProtKB-UniRule"/>
</dbReference>
<dbReference type="CDD" id="cd00349">
    <property type="entry name" value="Ribosomal_L11"/>
    <property type="match status" value="1"/>
</dbReference>
<dbReference type="FunFam" id="1.10.10.250:FF:000001">
    <property type="entry name" value="50S ribosomal protein L11"/>
    <property type="match status" value="1"/>
</dbReference>
<dbReference type="FunFam" id="3.30.1550.10:FF:000001">
    <property type="entry name" value="50S ribosomal protein L11"/>
    <property type="match status" value="1"/>
</dbReference>
<dbReference type="Gene3D" id="1.10.10.250">
    <property type="entry name" value="Ribosomal protein L11, C-terminal domain"/>
    <property type="match status" value="1"/>
</dbReference>
<dbReference type="Gene3D" id="3.30.1550.10">
    <property type="entry name" value="Ribosomal protein L11/L12, N-terminal domain"/>
    <property type="match status" value="1"/>
</dbReference>
<dbReference type="HAMAP" id="MF_00736">
    <property type="entry name" value="Ribosomal_uL11"/>
    <property type="match status" value="1"/>
</dbReference>
<dbReference type="InterPro" id="IPR000911">
    <property type="entry name" value="Ribosomal_uL11"/>
</dbReference>
<dbReference type="InterPro" id="IPR006519">
    <property type="entry name" value="Ribosomal_uL11_bac-typ"/>
</dbReference>
<dbReference type="InterPro" id="IPR020783">
    <property type="entry name" value="Ribosomal_uL11_C"/>
</dbReference>
<dbReference type="InterPro" id="IPR036769">
    <property type="entry name" value="Ribosomal_uL11_C_sf"/>
</dbReference>
<dbReference type="InterPro" id="IPR020784">
    <property type="entry name" value="Ribosomal_uL11_N"/>
</dbReference>
<dbReference type="InterPro" id="IPR036796">
    <property type="entry name" value="Ribosomal_uL11_N_sf"/>
</dbReference>
<dbReference type="NCBIfam" id="TIGR01632">
    <property type="entry name" value="L11_bact"/>
    <property type="match status" value="1"/>
</dbReference>
<dbReference type="PANTHER" id="PTHR11661">
    <property type="entry name" value="60S RIBOSOMAL PROTEIN L12"/>
    <property type="match status" value="1"/>
</dbReference>
<dbReference type="PANTHER" id="PTHR11661:SF1">
    <property type="entry name" value="LARGE RIBOSOMAL SUBUNIT PROTEIN UL11M"/>
    <property type="match status" value="1"/>
</dbReference>
<dbReference type="Pfam" id="PF00298">
    <property type="entry name" value="Ribosomal_L11"/>
    <property type="match status" value="1"/>
</dbReference>
<dbReference type="Pfam" id="PF03946">
    <property type="entry name" value="Ribosomal_L11_N"/>
    <property type="match status" value="1"/>
</dbReference>
<dbReference type="SMART" id="SM00649">
    <property type="entry name" value="RL11"/>
    <property type="match status" value="1"/>
</dbReference>
<dbReference type="SUPFAM" id="SSF54747">
    <property type="entry name" value="Ribosomal L11/L12e N-terminal domain"/>
    <property type="match status" value="1"/>
</dbReference>
<dbReference type="SUPFAM" id="SSF46906">
    <property type="entry name" value="Ribosomal protein L11, C-terminal domain"/>
    <property type="match status" value="1"/>
</dbReference>
<feature type="chain" id="PRO_0000104270" description="Large ribosomal subunit protein uL11">
    <location>
        <begin position="1"/>
        <end position="141"/>
    </location>
</feature>
<accession>Q8KG19</accession>
<gene>
    <name evidence="1" type="primary">rplK</name>
    <name type="ordered locus">CT0151</name>
</gene>
<reference key="1">
    <citation type="journal article" date="2002" name="Proc. Natl. Acad. Sci. U.S.A.">
        <title>The complete genome sequence of Chlorobium tepidum TLS, a photosynthetic, anaerobic, green-sulfur bacterium.</title>
        <authorList>
            <person name="Eisen J.A."/>
            <person name="Nelson K.E."/>
            <person name="Paulsen I.T."/>
            <person name="Heidelberg J.F."/>
            <person name="Wu M."/>
            <person name="Dodson R.J."/>
            <person name="DeBoy R.T."/>
            <person name="Gwinn M.L."/>
            <person name="Nelson W.C."/>
            <person name="Haft D.H."/>
            <person name="Hickey E.K."/>
            <person name="Peterson J.D."/>
            <person name="Durkin A.S."/>
            <person name="Kolonay J.F."/>
            <person name="Yang F."/>
            <person name="Holt I.E."/>
            <person name="Umayam L.A."/>
            <person name="Mason T.M."/>
            <person name="Brenner M."/>
            <person name="Shea T.P."/>
            <person name="Parksey D.S."/>
            <person name="Nierman W.C."/>
            <person name="Feldblyum T.V."/>
            <person name="Hansen C.L."/>
            <person name="Craven M.B."/>
            <person name="Radune D."/>
            <person name="Vamathevan J.J."/>
            <person name="Khouri H.M."/>
            <person name="White O."/>
            <person name="Gruber T.M."/>
            <person name="Ketchum K.A."/>
            <person name="Venter J.C."/>
            <person name="Tettelin H."/>
            <person name="Bryant D.A."/>
            <person name="Fraser C.M."/>
        </authorList>
    </citation>
    <scope>NUCLEOTIDE SEQUENCE [LARGE SCALE GENOMIC DNA]</scope>
    <source>
        <strain>ATCC 49652 / DSM 12025 / NBRC 103806 / TLS</strain>
    </source>
</reference>
<organism>
    <name type="scientific">Chlorobaculum tepidum (strain ATCC 49652 / DSM 12025 / NBRC 103806 / TLS)</name>
    <name type="common">Chlorobium tepidum</name>
    <dbReference type="NCBI Taxonomy" id="194439"/>
    <lineage>
        <taxon>Bacteria</taxon>
        <taxon>Pseudomonadati</taxon>
        <taxon>Chlorobiota</taxon>
        <taxon>Chlorobiia</taxon>
        <taxon>Chlorobiales</taxon>
        <taxon>Chlorobiaceae</taxon>
        <taxon>Chlorobaculum</taxon>
    </lineage>
</organism>
<proteinExistence type="inferred from homology"/>
<comment type="function">
    <text evidence="1">Forms part of the ribosomal stalk which helps the ribosome interact with GTP-bound translation factors.</text>
</comment>
<comment type="subunit">
    <text evidence="1">Part of the ribosomal stalk of the 50S ribosomal subunit. Interacts with L10 and the large rRNA to form the base of the stalk. L10 forms an elongated spine to which L12 dimers bind in a sequential fashion forming a multimeric L10(L12)X complex.</text>
</comment>
<comment type="PTM">
    <text evidence="1">One or more lysine residues are methylated.</text>
</comment>
<comment type="similarity">
    <text evidence="1">Belongs to the universal ribosomal protein uL11 family.</text>
</comment>
<name>RL11_CHLTE</name>